<protein>
    <recommendedName>
        <fullName>Cold-inducible RNA-binding protein B</fullName>
    </recommendedName>
    <alternativeName>
        <fullName evidence="11">Cold-inducible RNA-binding protein 2</fullName>
        <shortName evidence="8">xCIRP2</shortName>
    </alternativeName>
    <alternativeName>
        <fullName>Glycine-rich RNA-binding protein CIRP-B</fullName>
    </alternativeName>
</protein>
<gene>
    <name type="primary">cirbp-b</name>
    <name type="synonym">cirbp</name>
    <name evidence="10" type="synonym">cirp2</name>
</gene>
<organism>
    <name type="scientific">Xenopus laevis</name>
    <name type="common">African clawed frog</name>
    <dbReference type="NCBI Taxonomy" id="8355"/>
    <lineage>
        <taxon>Eukaryota</taxon>
        <taxon>Metazoa</taxon>
        <taxon>Chordata</taxon>
        <taxon>Craniata</taxon>
        <taxon>Vertebrata</taxon>
        <taxon>Euteleostomi</taxon>
        <taxon>Amphibia</taxon>
        <taxon>Batrachia</taxon>
        <taxon>Anura</taxon>
        <taxon>Pipoidea</taxon>
        <taxon>Pipidae</taxon>
        <taxon>Xenopodinae</taxon>
        <taxon>Xenopus</taxon>
        <taxon>Xenopus</taxon>
    </lineage>
</organism>
<keyword id="KW-0963">Cytoplasm</keyword>
<keyword id="KW-0217">Developmental protein</keyword>
<keyword id="KW-0903">Direct protein sequencing</keyword>
<keyword id="KW-0488">Methylation</keyword>
<keyword id="KW-0539">Nucleus</keyword>
<keyword id="KW-1185">Reference proteome</keyword>
<keyword id="KW-0694">RNA-binding</keyword>
<keyword id="KW-0346">Stress response</keyword>
<proteinExistence type="evidence at protein level"/>
<evidence type="ECO:0000255" key="1">
    <source>
        <dbReference type="PROSITE-ProRule" id="PRU00176"/>
    </source>
</evidence>
<evidence type="ECO:0000256" key="2">
    <source>
        <dbReference type="SAM" id="MobiDB-lite"/>
    </source>
</evidence>
<evidence type="ECO:0000269" key="3">
    <source>
    </source>
</evidence>
<evidence type="ECO:0000269" key="4">
    <source>
    </source>
</evidence>
<evidence type="ECO:0000269" key="5">
    <source>
    </source>
</evidence>
<evidence type="ECO:0000269" key="6">
    <source>
    </source>
</evidence>
<evidence type="ECO:0000269" key="7">
    <source>
    </source>
</evidence>
<evidence type="ECO:0000303" key="8">
    <source>
    </source>
</evidence>
<evidence type="ECO:0000305" key="9"/>
<evidence type="ECO:0000312" key="10">
    <source>
        <dbReference type="EMBL" id="AAH54250.1"/>
    </source>
</evidence>
<evidence type="ECO:0000312" key="11">
    <source>
        <dbReference type="EMBL" id="BAB19129.1"/>
    </source>
</evidence>
<feature type="chain" id="PRO_0000390930" description="Cold-inducible RNA-binding protein B">
    <location>
        <begin position="1"/>
        <end position="166"/>
    </location>
</feature>
<feature type="domain" description="RRM" evidence="1">
    <location>
        <begin position="5"/>
        <end position="83"/>
    </location>
</feature>
<feature type="region of interest" description="Disordered" evidence="2">
    <location>
        <begin position="68"/>
        <end position="166"/>
    </location>
</feature>
<feature type="compositionally biased region" description="Gly residues" evidence="2">
    <location>
        <begin position="92"/>
        <end position="115"/>
    </location>
</feature>
<feature type="compositionally biased region" description="Low complexity" evidence="2">
    <location>
        <begin position="133"/>
        <end position="149"/>
    </location>
</feature>
<feature type="compositionally biased region" description="Basic and acidic residues" evidence="2">
    <location>
        <begin position="157"/>
        <end position="166"/>
    </location>
</feature>
<name>CIRBB_XENLA</name>
<dbReference type="EMBL" id="AB044535">
    <property type="protein sequence ID" value="BAB19129.1"/>
    <property type="molecule type" value="mRNA"/>
</dbReference>
<dbReference type="EMBL" id="BC054250">
    <property type="protein sequence ID" value="AAH54250.1"/>
    <property type="molecule type" value="mRNA"/>
</dbReference>
<dbReference type="RefSeq" id="NP_001079794.1">
    <property type="nucleotide sequence ID" value="NM_001086325.1"/>
</dbReference>
<dbReference type="SMR" id="Q9DED4"/>
<dbReference type="BioGRID" id="97727">
    <property type="interactions" value="1"/>
</dbReference>
<dbReference type="IntAct" id="Q9DED4">
    <property type="interactions" value="1"/>
</dbReference>
<dbReference type="MINT" id="Q9DED4"/>
<dbReference type="DNASU" id="379484"/>
<dbReference type="GeneID" id="379484"/>
<dbReference type="KEGG" id="xla:379484"/>
<dbReference type="AGR" id="Xenbase:XB-GENE-492785"/>
<dbReference type="CTD" id="379484"/>
<dbReference type="Xenbase" id="XB-GENE-492785">
    <property type="gene designation" value="cirbp.S"/>
</dbReference>
<dbReference type="OMA" id="GWEDRSY"/>
<dbReference type="OrthoDB" id="4207594at2759"/>
<dbReference type="Proteomes" id="UP000186698">
    <property type="component" value="Chromosome 1S"/>
</dbReference>
<dbReference type="Bgee" id="379484">
    <property type="expression patterns" value="Expressed in gastrula and 19 other cell types or tissues"/>
</dbReference>
<dbReference type="GO" id="GO:0005737">
    <property type="term" value="C:cytoplasm"/>
    <property type="evidence" value="ECO:0000314"/>
    <property type="project" value="UniProtKB"/>
</dbReference>
<dbReference type="GO" id="GO:0005654">
    <property type="term" value="C:nucleoplasm"/>
    <property type="evidence" value="ECO:0007669"/>
    <property type="project" value="UniProtKB-SubCell"/>
</dbReference>
<dbReference type="GO" id="GO:0005634">
    <property type="term" value="C:nucleus"/>
    <property type="evidence" value="ECO:0000314"/>
    <property type="project" value="UniProtKB"/>
</dbReference>
<dbReference type="GO" id="GO:0005681">
    <property type="term" value="C:spliceosomal complex"/>
    <property type="evidence" value="ECO:0000318"/>
    <property type="project" value="GO_Central"/>
</dbReference>
<dbReference type="GO" id="GO:0019899">
    <property type="term" value="F:enzyme binding"/>
    <property type="evidence" value="ECO:0000353"/>
    <property type="project" value="UniProtKB"/>
</dbReference>
<dbReference type="GO" id="GO:0003730">
    <property type="term" value="F:mRNA 3'-UTR binding"/>
    <property type="evidence" value="ECO:0000250"/>
    <property type="project" value="UniProtKB"/>
</dbReference>
<dbReference type="GO" id="GO:0003729">
    <property type="term" value="F:mRNA binding"/>
    <property type="evidence" value="ECO:0000314"/>
    <property type="project" value="UniProtKB"/>
</dbReference>
<dbReference type="GO" id="GO:0043022">
    <property type="term" value="F:ribosome binding"/>
    <property type="evidence" value="ECO:0000314"/>
    <property type="project" value="UniProtKB"/>
</dbReference>
<dbReference type="GO" id="GO:0003723">
    <property type="term" value="F:RNA binding"/>
    <property type="evidence" value="ECO:0000318"/>
    <property type="project" value="GO_Central"/>
</dbReference>
<dbReference type="GO" id="GO:0016477">
    <property type="term" value="P:cell migration"/>
    <property type="evidence" value="ECO:0000315"/>
    <property type="project" value="UniProtKB"/>
</dbReference>
<dbReference type="GO" id="GO:0009792">
    <property type="term" value="P:embryo development ending in birth or egg hatching"/>
    <property type="evidence" value="ECO:0000315"/>
    <property type="project" value="UniProtKB"/>
</dbReference>
<dbReference type="GO" id="GO:0007369">
    <property type="term" value="P:gastrulation"/>
    <property type="evidence" value="ECO:0000315"/>
    <property type="project" value="UniProtKB"/>
</dbReference>
<dbReference type="GO" id="GO:0048255">
    <property type="term" value="P:mRNA stabilization"/>
    <property type="evidence" value="ECO:0000315"/>
    <property type="project" value="UniProtKB"/>
</dbReference>
<dbReference type="GO" id="GO:0060212">
    <property type="term" value="P:negative regulation of nuclear-transcribed mRNA poly(A) tail shortening"/>
    <property type="evidence" value="ECO:0000315"/>
    <property type="project" value="UniProtKB"/>
</dbReference>
<dbReference type="GO" id="GO:0022008">
    <property type="term" value="P:neurogenesis"/>
    <property type="evidence" value="ECO:0000315"/>
    <property type="project" value="UniProtKB"/>
</dbReference>
<dbReference type="GO" id="GO:0048026">
    <property type="term" value="P:positive regulation of mRNA splicing, via spliceosome"/>
    <property type="evidence" value="ECO:0000318"/>
    <property type="project" value="GO_Central"/>
</dbReference>
<dbReference type="GO" id="GO:0045727">
    <property type="term" value="P:positive regulation of translation"/>
    <property type="evidence" value="ECO:0000250"/>
    <property type="project" value="UniProtKB"/>
</dbReference>
<dbReference type="GO" id="GO:0048793">
    <property type="term" value="P:pronephros development"/>
    <property type="evidence" value="ECO:0000250"/>
    <property type="project" value="UniProtKB"/>
</dbReference>
<dbReference type="GO" id="GO:0009409">
    <property type="term" value="P:response to cold"/>
    <property type="evidence" value="ECO:0000250"/>
    <property type="project" value="UniProtKB"/>
</dbReference>
<dbReference type="CDD" id="cd12449">
    <property type="entry name" value="RRM_CIRBP_RBM3"/>
    <property type="match status" value="1"/>
</dbReference>
<dbReference type="FunFam" id="3.30.70.330:FF:000174">
    <property type="entry name" value="cold-inducible RNA-binding protein isoform X2"/>
    <property type="match status" value="1"/>
</dbReference>
<dbReference type="Gene3D" id="3.30.70.330">
    <property type="match status" value="1"/>
</dbReference>
<dbReference type="InterPro" id="IPR012677">
    <property type="entry name" value="Nucleotide-bd_a/b_plait_sf"/>
</dbReference>
<dbReference type="InterPro" id="IPR035979">
    <property type="entry name" value="RBD_domain_sf"/>
</dbReference>
<dbReference type="InterPro" id="IPR050441">
    <property type="entry name" value="RBM"/>
</dbReference>
<dbReference type="InterPro" id="IPR034278">
    <property type="entry name" value="RBM3/CIRBP_RRM"/>
</dbReference>
<dbReference type="InterPro" id="IPR000504">
    <property type="entry name" value="RRM_dom"/>
</dbReference>
<dbReference type="InterPro" id="IPR003954">
    <property type="entry name" value="RRM_dom_euk"/>
</dbReference>
<dbReference type="PANTHER" id="PTHR48034">
    <property type="entry name" value="TRANSFORMER-2 SEX-DETERMINING PROTEIN-RELATED"/>
    <property type="match status" value="1"/>
</dbReference>
<dbReference type="Pfam" id="PF00076">
    <property type="entry name" value="RRM_1"/>
    <property type="match status" value="1"/>
</dbReference>
<dbReference type="SMART" id="SM00360">
    <property type="entry name" value="RRM"/>
    <property type="match status" value="1"/>
</dbReference>
<dbReference type="SMART" id="SM00361">
    <property type="entry name" value="RRM_1"/>
    <property type="match status" value="1"/>
</dbReference>
<dbReference type="SUPFAM" id="SSF54928">
    <property type="entry name" value="RNA-binding domain, RBD"/>
    <property type="match status" value="1"/>
</dbReference>
<dbReference type="PROSITE" id="PS50102">
    <property type="entry name" value="RRM"/>
    <property type="match status" value="1"/>
</dbReference>
<comment type="function">
    <text evidence="5 6 7">Cold-inducible mRNA binding protein. Acts cooperatively with elavl1/elrA to stabilize AU-rich element (ARE)-containing mRNAs by binding to them and inhibiting their deadenylation. Essential for embryonic gastrulation and neural development, acting to maintain the expression of a set of adhesion molecules, and cell movement during embryogenesis. Required for pronephros development.</text>
</comment>
<comment type="subunit">
    <text evidence="3 4 5">Interacts with prmt1. Interacts with elavl1/elrA (via RRM3). Associates with ribosomes.</text>
</comment>
<comment type="subcellular location">
    <subcellularLocation>
        <location evidence="3 4">Nucleus</location>
        <location evidence="3 4">Nucleoplasm</location>
    </subcellularLocation>
    <subcellularLocation>
        <location evidence="3 4">Cytoplasm</location>
    </subcellularLocation>
    <text evidence="3 4">Shuttles between the nucleus and cytoplasm. Predominantly cytoplasmic in oocytes. Translocates from the nucleus to the cytoplasm upon arginine methylation.</text>
</comment>
<comment type="tissue specificity">
    <text evidence="3 7">In adults, most abundant in testis, ovary, brain and liver, with lower expression in kidney and heart.</text>
</comment>
<comment type="developmental stage">
    <text evidence="3">Expressed both maternally and zygotically. Levels accumulate during oogenesis (at protein level).</text>
</comment>
<comment type="induction">
    <text evidence="7">By tcf7l1/tcf-3.</text>
</comment>
<comment type="domain">
    <text evidence="4">The glycine-rich domain, which contains a number of RGG motifs, is necessary to regulate nucleocytoplasmic localization.</text>
</comment>
<comment type="PTM">
    <text evidence="4">Methylated on arginine residues within RGG motifs. Methylation by prmt1 promotes cytoplasmic accumulation.</text>
</comment>
<sequence>MSDEGKLFIGGLNFDTNEESLEQVFSKYGQISEVVVVKDRETKRSRGFGFVTFENPDDAKDAMMAMNGKAVDGRQIRVDQAGKSSGDRRGGYRGGSSGGRGFFRGGRGRGGGDRGYGSSRFDNRSGGYGGSSGSRDYYSSGRSQGSYGDRAGGSYRDSYDSYATHE</sequence>
<accession>Q9DED4</accession>
<reference evidence="9 11" key="1">
    <citation type="journal article" date="2000" name="Nucleic Acids Res.">
        <title>CIRP2, a major cytoplasmic RNA-binding protein in Xenopus oocytes.</title>
        <authorList>
            <person name="Matsumoto K."/>
            <person name="Aoki K."/>
            <person name="Dohmae N."/>
            <person name="Takio K."/>
            <person name="Tsujimoto M."/>
        </authorList>
    </citation>
    <scope>NUCLEOTIDE SEQUENCE [MRNA]</scope>
    <scope>PARTIAL PROTEIN SEQUENCE</scope>
    <scope>RNA-BINDING</scope>
    <scope>SUBUNIT</scope>
    <scope>SUBCELLULAR LOCATION</scope>
    <scope>TISSUE SPECIFICITY</scope>
    <scope>DEVELOPMENTAL STAGE</scope>
    <source>
        <tissue evidence="3">Oocyte</tissue>
    </source>
</reference>
<reference evidence="10" key="2">
    <citation type="submission" date="2003-06" db="EMBL/GenBank/DDBJ databases">
        <authorList>
            <consortium name="NIH - Xenopus Gene Collection (XGC) project"/>
        </authorList>
    </citation>
    <scope>NUCLEOTIDE SEQUENCE [LARGE SCALE MRNA]</scope>
    <source>
        <tissue evidence="10">Tadpole</tissue>
    </source>
</reference>
<reference evidence="9" key="3">
    <citation type="journal article" date="2002" name="Nucleic Acids Res.">
        <title>Methylation of Xenopus CIRP2 regulates its arginine- and glycine-rich region-mediated nucleocytoplasmic distribution.</title>
        <authorList>
            <person name="Aoki K."/>
            <person name="Ishii Y."/>
            <person name="Matsumoto K."/>
            <person name="Tsujimoto M."/>
        </authorList>
    </citation>
    <scope>INTERACTION WITH PRMT1</scope>
    <scope>SUBCELLULAR LOCATION</scope>
    <scope>DOMAIN</scope>
    <scope>METHYLATION</scope>
</reference>
<reference evidence="9" key="4">
    <citation type="journal article" date="2003" name="J. Biol. Chem.">
        <title>Xenopus cold-inducible RNA-binding protein 2 interacts with ElrA, the Xenopus homolog of HuR, and inhibits deadenylation of specific mRNAs.</title>
        <authorList>
            <person name="Aoki K."/>
            <person name="Matsumoto K."/>
            <person name="Tsujimoto M."/>
        </authorList>
    </citation>
    <scope>FUNCTION</scope>
    <scope>RNA-BINDING</scope>
    <scope>INTERACTION WITH ELAVL1</scope>
</reference>
<reference evidence="9" key="5">
    <citation type="journal article" date="2006" name="Biochem. Biophys. Res. Commun.">
        <title>Cold-inducible RNA binding protein is required for the expression of adhesion molecules and embryonic cell movement in Xenopus laevis.</title>
        <authorList>
            <person name="Peng Y."/>
            <person name="Yang P.H."/>
            <person name="Tanner J.A."/>
            <person name="Huang J.D."/>
            <person name="Li M."/>
            <person name="Lee H.F."/>
            <person name="Xu R.H."/>
            <person name="Kung H.F."/>
            <person name="Lin M.C."/>
        </authorList>
    </citation>
    <scope>FUNCTION</scope>
</reference>
<reference evidence="9" key="6">
    <citation type="journal article" date="2008" name="BMC Dev. Biol.">
        <title>Cold-inducible RNA binding protein (CIRP), a novel XTcf-3 specific target gene regulates neural development in Xenopus.</title>
        <authorList>
            <person name="van Venrooy S."/>
            <person name="Fichtner D."/>
            <person name="Kunz M."/>
            <person name="Wedlich D."/>
            <person name="Gradl D."/>
        </authorList>
    </citation>
    <scope>FUNCTION</scope>
    <scope>TISSUE SPECIFICITY</scope>
    <scope>INDUCTION</scope>
</reference>